<organism>
    <name type="scientific">Kalanchoe daigremontiana</name>
    <name type="common">Devil's backbone</name>
    <name type="synonym">Bryophyllum daigremontianum</name>
    <dbReference type="NCBI Taxonomy" id="23013"/>
    <lineage>
        <taxon>Eukaryota</taxon>
        <taxon>Viridiplantae</taxon>
        <taxon>Streptophyta</taxon>
        <taxon>Embryophyta</taxon>
        <taxon>Tracheophyta</taxon>
        <taxon>Spermatophyta</taxon>
        <taxon>Magnoliopsida</taxon>
        <taxon>eudicotyledons</taxon>
        <taxon>Gunneridae</taxon>
        <taxon>Pentapetalae</taxon>
        <taxon>Saxifragales</taxon>
        <taxon>Crassulaceae</taxon>
        <taxon>Kalanchoe</taxon>
    </lineage>
</organism>
<feature type="chain" id="PRO_0000418483" description="Friedelin synthase">
    <location>
        <begin position="1"/>
        <end position="767"/>
    </location>
</feature>
<feature type="repeat" description="PFTB 1">
    <location>
        <begin position="148"/>
        <end position="189"/>
    </location>
</feature>
<feature type="repeat" description="PFTB 2">
    <location>
        <begin position="640"/>
        <end position="681"/>
    </location>
</feature>
<feature type="active site" description="Proton donor" evidence="1">
    <location>
        <position position="485"/>
    </location>
</feature>
<proteinExistence type="evidence at protein level"/>
<dbReference type="EC" id="5.4.99.50"/>
<dbReference type="EMBL" id="HM623870">
    <property type="protein sequence ID" value="ADK35125.1"/>
    <property type="molecule type" value="mRNA"/>
</dbReference>
<dbReference type="SMR" id="E2IUA8"/>
<dbReference type="KEGG" id="ag:ADK35125"/>
<dbReference type="BioCyc" id="MetaCyc:MONOMER-17975"/>
<dbReference type="GO" id="GO:0005811">
    <property type="term" value="C:lipid droplet"/>
    <property type="evidence" value="ECO:0007669"/>
    <property type="project" value="InterPro"/>
</dbReference>
<dbReference type="GO" id="GO:0042300">
    <property type="term" value="F:beta-amyrin synthase activity"/>
    <property type="evidence" value="ECO:0007669"/>
    <property type="project" value="TreeGrafter"/>
</dbReference>
<dbReference type="GO" id="GO:0016866">
    <property type="term" value="F:intramolecular transferase activity"/>
    <property type="evidence" value="ECO:0000314"/>
    <property type="project" value="UniProtKB"/>
</dbReference>
<dbReference type="GO" id="GO:0016104">
    <property type="term" value="P:triterpenoid biosynthetic process"/>
    <property type="evidence" value="ECO:0000314"/>
    <property type="project" value="UniProtKB"/>
</dbReference>
<dbReference type="CDD" id="cd02892">
    <property type="entry name" value="SQCY_1"/>
    <property type="match status" value="1"/>
</dbReference>
<dbReference type="FunFam" id="1.50.10.20:FF:000011">
    <property type="entry name" value="Terpene cyclase/mutase family member"/>
    <property type="match status" value="1"/>
</dbReference>
<dbReference type="FunFam" id="1.50.10.20:FF:000064">
    <property type="entry name" value="Uncharacterized protein"/>
    <property type="match status" value="1"/>
</dbReference>
<dbReference type="Gene3D" id="1.50.10.20">
    <property type="match status" value="2"/>
</dbReference>
<dbReference type="InterPro" id="IPR032696">
    <property type="entry name" value="SQ_cyclase_C"/>
</dbReference>
<dbReference type="InterPro" id="IPR032697">
    <property type="entry name" value="SQ_cyclase_N"/>
</dbReference>
<dbReference type="InterPro" id="IPR018333">
    <property type="entry name" value="Squalene_cyclase"/>
</dbReference>
<dbReference type="InterPro" id="IPR002365">
    <property type="entry name" value="Terpene_synthase_CS"/>
</dbReference>
<dbReference type="InterPro" id="IPR008930">
    <property type="entry name" value="Terpenoid_cyclase/PrenylTrfase"/>
</dbReference>
<dbReference type="NCBIfam" id="TIGR01787">
    <property type="entry name" value="squalene_cyclas"/>
    <property type="match status" value="1"/>
</dbReference>
<dbReference type="PANTHER" id="PTHR11764">
    <property type="entry name" value="TERPENE CYCLASE/MUTASE FAMILY MEMBER"/>
    <property type="match status" value="1"/>
</dbReference>
<dbReference type="PANTHER" id="PTHR11764:SF71">
    <property type="entry name" value="TERPENE CYCLASE_MUTASE FAMILY MEMBER"/>
    <property type="match status" value="1"/>
</dbReference>
<dbReference type="Pfam" id="PF13243">
    <property type="entry name" value="SQHop_cyclase_C"/>
    <property type="match status" value="1"/>
</dbReference>
<dbReference type="Pfam" id="PF13249">
    <property type="entry name" value="SQHop_cyclase_N"/>
    <property type="match status" value="1"/>
</dbReference>
<dbReference type="SFLD" id="SFLDG01016">
    <property type="entry name" value="Prenyltransferase_Like_2"/>
    <property type="match status" value="1"/>
</dbReference>
<dbReference type="SUPFAM" id="SSF48239">
    <property type="entry name" value="Terpenoid cyclases/Protein prenyltransferases"/>
    <property type="match status" value="2"/>
</dbReference>
<dbReference type="PROSITE" id="PS01074">
    <property type="entry name" value="TERPENE_SYNTHASES"/>
    <property type="match status" value="1"/>
</dbReference>
<accession>E2IUA8</accession>
<sequence length="767" mass="88396">MWKLKIAEGGSDPYIYTTNNFVGRQIWEFDPQATDPQQLAKVEAARLNFYNHRHKIKPSSDLLWRLQFLEEKDFRQNIAQVKVEDGEEVSYEAATAALKRGVHFYSALQASDGHWPAENAGPMFFMSPLVMCLYITGHLNTIFTEEHRRETLRYIYYHQNEDGGWGFHIEGQSTMFGTVLNYICMRLLGEGPEGGQDNAVSRGRKWILDHGGATAIPSWGKTWLSIMGLCDWSGCNPMPPEFWLLPSYLPMHPAKMWCYCRMVYMPMSYLYGKRFTTHITPLILQLREELHTQPYDQINWKKVRHVCCKEDTYYPHPILQDLIWDTLYLTTEPLLTRWPLNKLIRERALKKTMKHIHYEDENSRYIVIGAVEKVLCMLACWVEDPNGDYFKKHLARVPDYFWVAEDGMKIQSFGSQHWDTAFFVQALLASDMTDEIRTTLAKAHDCIKKSQVKDNPSGDFRSMYRHISKGAWTFSDQDHGWQLSDCTAEGLKCCLLFSLMQPEVVGEAMPPERLYDSVNVLLYLQSKNGGMPGWEPAGESEWLELLNPTEFFENIVIEHEYVECTSSAVQALVLFKKLYPLHRRKEVERFITNGAKYLEDIQMPDGSWYGNWGVCFTYGAWFALEGLSAAGKTYNNCAAVRKGVDFLLNIQLEDGGWGESYQSCPDKKYVPLEDNRSNLVQTSWALMGLIYAGQADRDPTPLHRAAKLLINSQLEDGDFPQQEIAGVFKMNCTLHFAAYRNIFPIWALAVYRRFCNPNSEAISKPSK</sequence>
<name>FRIES_KALDA</name>
<reference key="1">
    <citation type="journal article" date="2010" name="J. Biol. Chem.">
        <title>Cloning and characterization of oxidosqualene cyclases from Kalanchoe daigremontiana: enzymes catalyzing up to 10 rearrangement steps yielding friedelin and other triterpenoids.</title>
        <authorList>
            <person name="Wang Z."/>
            <person name="Yeats T."/>
            <person name="Han H."/>
            <person name="Jetter R."/>
        </authorList>
    </citation>
    <scope>NUCLEOTIDE SEQUENCE [MRNA]</scope>
    <scope>FUNCTION</scope>
    <scope>CATALYTIC ACTIVITY</scope>
    <scope>TISSUE SPECIFICITY</scope>
</reference>
<protein>
    <recommendedName>
        <fullName>Friedelin synthase</fullName>
        <shortName>KdFRS</shortName>
        <ecNumber>5.4.99.50</ecNumber>
    </recommendedName>
</protein>
<keyword id="KW-0413">Isomerase</keyword>
<keyword id="KW-0677">Repeat</keyword>
<comment type="function">
    <text evidence="2">Oxidosqualene cyclase that generates friedelin, a triterpenoid product with the maximum number of rearrangements possible. Friedelin is probably required to coat the leaf exterior as defense compound against pathogens or herbivores.</text>
</comment>
<comment type="catalytic activity">
    <reaction evidence="2">
        <text>(S)-2,3-epoxysqualene = friedelin</text>
        <dbReference type="Rhea" id="RHEA:31863"/>
        <dbReference type="ChEBI" id="CHEBI:5171"/>
        <dbReference type="ChEBI" id="CHEBI:15441"/>
        <dbReference type="EC" id="5.4.99.50"/>
    </reaction>
</comment>
<comment type="tissue specificity">
    <text evidence="2">Expressed only in the epidermal cells on both sides of the leaf and not in internal leaf tissues.</text>
</comment>
<comment type="similarity">
    <text evidence="3">Belongs to the terpene cyclase/mutase family.</text>
</comment>
<evidence type="ECO:0000250" key="1">
    <source>
        <dbReference type="UniProtKB" id="P48449"/>
    </source>
</evidence>
<evidence type="ECO:0000269" key="2">
    <source>
    </source>
</evidence>
<evidence type="ECO:0000305" key="3"/>